<protein>
    <recommendedName>
        <fullName>Tyramine N-feruloyltransferase 4/11</fullName>
        <ecNumber>2.3.1.110</ecNumber>
    </recommendedName>
    <alternativeName>
        <fullName>Hydroxycinnamoyl-CoA: tyramine N-hydroxycinnamoyltransferase</fullName>
    </alternativeName>
</protein>
<organism>
    <name type="scientific">Nicotiana tabacum</name>
    <name type="common">Common tobacco</name>
    <dbReference type="NCBI Taxonomy" id="4097"/>
    <lineage>
        <taxon>Eukaryota</taxon>
        <taxon>Viridiplantae</taxon>
        <taxon>Streptophyta</taxon>
        <taxon>Embryophyta</taxon>
        <taxon>Tracheophyta</taxon>
        <taxon>Spermatophyta</taxon>
        <taxon>Magnoliopsida</taxon>
        <taxon>eudicotyledons</taxon>
        <taxon>Gunneridae</taxon>
        <taxon>Pentapetalae</taxon>
        <taxon>asterids</taxon>
        <taxon>lamiids</taxon>
        <taxon>Solanales</taxon>
        <taxon>Solanaceae</taxon>
        <taxon>Nicotianoideae</taxon>
        <taxon>Nicotianeae</taxon>
        <taxon>Nicotiana</taxon>
    </lineage>
</organism>
<proteinExistence type="evidence at transcript level"/>
<reference key="1">
    <citation type="journal article" date="1999" name="Eur. J. Biochem.">
        <title>Identification and characterization of cDNA clones encoding hydroxycinnamoyl-CoA:tyramine N-hydroxycinnamoyltransferase from tobacco.</title>
        <authorList>
            <person name="Farmer M.J."/>
            <person name="Czernic P."/>
            <person name="Michael A."/>
            <person name="Negrel J."/>
        </authorList>
    </citation>
    <scope>NUCLEOTIDE SEQUENCE [MRNA] (THT4 AND THT11)</scope>
    <source>
        <strain>cv. Bottom Special</strain>
        <tissue>Leaf</tissue>
    </source>
</reference>
<comment type="function">
    <text>Synthesizes amides which are involved in stress response in the cell wall. Catalyzes the synthesis of hydroxycinnamic acid amides from hydroxycinnamoyl-CoA thioesters and various hydroxyphenylethylamines such as 4-coumaroyl-CoA and sinapoyl-CoA.</text>
</comment>
<comment type="catalytic activity">
    <reaction>
        <text>tyramine + (E)-feruloyl-CoA = N-[(E)-feruloyl]tyramine + CoA + H(+)</text>
        <dbReference type="Rhea" id="RHEA:19685"/>
        <dbReference type="ChEBI" id="CHEBI:15378"/>
        <dbReference type="ChEBI" id="CHEBI:17818"/>
        <dbReference type="ChEBI" id="CHEBI:57287"/>
        <dbReference type="ChEBI" id="CHEBI:87305"/>
        <dbReference type="ChEBI" id="CHEBI:327995"/>
        <dbReference type="EC" id="2.3.1.110"/>
    </reaction>
</comment>
<comment type="activity regulation">
    <text>Inhibited by (2-hydroxyphenyl)amino sulfinyl acetic acid 1,1-dimethylethyl ester, by DEPC and by N-ethylmaleimide.</text>
</comment>
<comment type="subunit">
    <text>Homodimer.</text>
</comment>
<comment type="subcellular location">
    <subcellularLocation>
        <location evidence="3">Cytoplasm</location>
    </subcellularLocation>
</comment>
<comment type="similarity">
    <text evidence="3">Belongs to the acetyltransferase family.</text>
</comment>
<comment type="sequence caution" evidence="3">
    <conflict type="erroneous initiation">
        <sequence resource="EMBL-CDS" id="CAB55501"/>
    </conflict>
</comment>
<gene>
    <name type="primary">THT4</name>
</gene>
<gene>
    <name type="primary">THT11</name>
</gene>
<sequence length="226" mass="25977">MATTNNKNLTITEKVYVRVRLANEADISHIYKLFYQIHEYHNYTHLYKATESSLCDLLFKANPNPLFYGPSVLLLEVSPTPFENTKKDEKFKPVLKTFDLRATVEDKEAEEFKSKSCGDEKEDVFIAGYAFFYANYSCFYDKAGIYFESLYFRESYRKLGMGSLLFGTVASIAANNGFASVEGIVAVWNKKSYDFYVNMGVEIFDEFRYGKLVGDALQKYADKEKA</sequence>
<feature type="chain" id="PRO_0000074602" description="Tyramine N-feruloyltransferase 4/11">
    <location>
        <begin position="1"/>
        <end position="226"/>
    </location>
</feature>
<feature type="domain" description="N-acetyltransferase" evidence="2">
    <location>
        <begin position="72"/>
        <end position="222"/>
    </location>
</feature>
<feature type="region of interest" description="Important in binding site and for catalytic activity" evidence="1">
    <location>
        <begin position="29"/>
        <end position="45"/>
    </location>
</feature>
<feature type="site" description="Important for catalytic activity">
    <location>
        <position position="157"/>
    </location>
</feature>
<feature type="site" description="Important for catalytic activity">
    <location>
        <position position="160"/>
    </location>
</feature>
<feature type="site" description="Important for catalytic activity">
    <location>
        <position position="162"/>
    </location>
</feature>
<dbReference type="EC" id="2.3.1.110"/>
<dbReference type="EMBL" id="AJ131767">
    <property type="protein sequence ID" value="CAB55501.1"/>
    <property type="status" value="ALT_INIT"/>
    <property type="molecule type" value="mRNA"/>
</dbReference>
<dbReference type="EMBL" id="AJ131768">
    <property type="protein sequence ID" value="CAB55502.1"/>
    <property type="molecule type" value="mRNA"/>
</dbReference>
<dbReference type="RefSeq" id="NP_001313019.1">
    <property type="nucleotide sequence ID" value="NM_001326090.1"/>
</dbReference>
<dbReference type="SMR" id="Q9SMB8"/>
<dbReference type="STRING" id="4097.Q9SMB8"/>
<dbReference type="PaxDb" id="4097-Q9SMB8"/>
<dbReference type="GeneID" id="107822189"/>
<dbReference type="KEGG" id="nta:107822189"/>
<dbReference type="OMA" id="MGVEIFE"/>
<dbReference type="OrthoDB" id="7305308at2759"/>
<dbReference type="Proteomes" id="UP000084051">
    <property type="component" value="Unplaced"/>
</dbReference>
<dbReference type="GO" id="GO:0005737">
    <property type="term" value="C:cytoplasm"/>
    <property type="evidence" value="ECO:0007669"/>
    <property type="project" value="UniProtKB-SubCell"/>
</dbReference>
<dbReference type="GO" id="GO:0050366">
    <property type="term" value="F:tyramine N-feruloyltransferase activity"/>
    <property type="evidence" value="ECO:0007669"/>
    <property type="project" value="UniProtKB-EC"/>
</dbReference>
<dbReference type="Gene3D" id="3.40.630.30">
    <property type="match status" value="1"/>
</dbReference>
<dbReference type="InterPro" id="IPR016181">
    <property type="entry name" value="Acyl_CoA_acyltransferase"/>
</dbReference>
<dbReference type="InterPro" id="IPR051016">
    <property type="entry name" value="Diverse_Substrate_AcTransf"/>
</dbReference>
<dbReference type="InterPro" id="IPR000182">
    <property type="entry name" value="GNAT_dom"/>
</dbReference>
<dbReference type="PANTHER" id="PTHR10545">
    <property type="entry name" value="DIAMINE N-ACETYLTRANSFERASE"/>
    <property type="match status" value="1"/>
</dbReference>
<dbReference type="PANTHER" id="PTHR10545:SF54">
    <property type="entry name" value="TYRAMINE N-FERULOYLTRANSFERASE 4_11"/>
    <property type="match status" value="1"/>
</dbReference>
<dbReference type="Pfam" id="PF00583">
    <property type="entry name" value="Acetyltransf_1"/>
    <property type="match status" value="1"/>
</dbReference>
<dbReference type="SUPFAM" id="SSF55729">
    <property type="entry name" value="Acyl-CoA N-acyltransferases (Nat)"/>
    <property type="match status" value="1"/>
</dbReference>
<dbReference type="PROSITE" id="PS51186">
    <property type="entry name" value="GNAT"/>
    <property type="match status" value="1"/>
</dbReference>
<evidence type="ECO:0000255" key="1"/>
<evidence type="ECO:0000255" key="2">
    <source>
        <dbReference type="PROSITE-ProRule" id="PRU00532"/>
    </source>
</evidence>
<evidence type="ECO:0000305" key="3"/>
<keyword id="KW-0012">Acyltransferase</keyword>
<keyword id="KW-0963">Cytoplasm</keyword>
<keyword id="KW-1185">Reference proteome</keyword>
<keyword id="KW-0808">Transferase</keyword>
<accession>Q9SMB8</accession>
<accession>Q9SMB9</accession>
<name>THT11_TOBAC</name>